<gene>
    <name evidence="1" type="primary">rbfA</name>
    <name type="ordered locus">SAV1270</name>
</gene>
<name>RBFA_STAAM</name>
<organism>
    <name type="scientific">Staphylococcus aureus (strain Mu50 / ATCC 700699)</name>
    <dbReference type="NCBI Taxonomy" id="158878"/>
    <lineage>
        <taxon>Bacteria</taxon>
        <taxon>Bacillati</taxon>
        <taxon>Bacillota</taxon>
        <taxon>Bacilli</taxon>
        <taxon>Bacillales</taxon>
        <taxon>Staphylococcaceae</taxon>
        <taxon>Staphylococcus</taxon>
    </lineage>
</organism>
<sequence length="116" mass="13515">MSSMRAERVGEQMKKELMDIINNKVKDPRVGFITITDVVLTNDLSQAKVFLTVLGNDKEVENTFKALDKAKGFIKSELGSRMRLRIMPELMYEYDQSIEYGNKIERMIQDLHKQDR</sequence>
<comment type="function">
    <text evidence="1">One of several proteins that assist in the late maturation steps of the functional core of the 30S ribosomal subunit. Associates with free 30S ribosomal subunits (but not with 30S subunits that are part of 70S ribosomes or polysomes). Required for efficient processing of 16S rRNA. May interact with the 5'-terminal helix region of 16S rRNA.</text>
</comment>
<comment type="subunit">
    <text evidence="1">Monomer. Binds 30S ribosomal subunits, but not 50S ribosomal subunits or 70S ribosomes.</text>
</comment>
<comment type="subcellular location">
    <subcellularLocation>
        <location evidence="1">Cytoplasm</location>
    </subcellularLocation>
</comment>
<comment type="similarity">
    <text evidence="1">Belongs to the RbfA family.</text>
</comment>
<accession>P65966</accession>
<accession>Q99UK2</accession>
<proteinExistence type="inferred from homology"/>
<feature type="chain" id="PRO_0000102731" description="Ribosome-binding factor A">
    <location>
        <begin position="1"/>
        <end position="116"/>
    </location>
</feature>
<reference key="1">
    <citation type="journal article" date="2001" name="Lancet">
        <title>Whole genome sequencing of meticillin-resistant Staphylococcus aureus.</title>
        <authorList>
            <person name="Kuroda M."/>
            <person name="Ohta T."/>
            <person name="Uchiyama I."/>
            <person name="Baba T."/>
            <person name="Yuzawa H."/>
            <person name="Kobayashi I."/>
            <person name="Cui L."/>
            <person name="Oguchi A."/>
            <person name="Aoki K."/>
            <person name="Nagai Y."/>
            <person name="Lian J.-Q."/>
            <person name="Ito T."/>
            <person name="Kanamori M."/>
            <person name="Matsumaru H."/>
            <person name="Maruyama A."/>
            <person name="Murakami H."/>
            <person name="Hosoyama A."/>
            <person name="Mizutani-Ui Y."/>
            <person name="Takahashi N.K."/>
            <person name="Sawano T."/>
            <person name="Inoue R."/>
            <person name="Kaito C."/>
            <person name="Sekimizu K."/>
            <person name="Hirakawa H."/>
            <person name="Kuhara S."/>
            <person name="Goto S."/>
            <person name="Yabuzaki J."/>
            <person name="Kanehisa M."/>
            <person name="Yamashita A."/>
            <person name="Oshima K."/>
            <person name="Furuya K."/>
            <person name="Yoshino C."/>
            <person name="Shiba T."/>
            <person name="Hattori M."/>
            <person name="Ogasawara N."/>
            <person name="Hayashi H."/>
            <person name="Hiramatsu K."/>
        </authorList>
    </citation>
    <scope>NUCLEOTIDE SEQUENCE [LARGE SCALE GENOMIC DNA]</scope>
    <source>
        <strain>Mu50 / ATCC 700699</strain>
    </source>
</reference>
<evidence type="ECO:0000255" key="1">
    <source>
        <dbReference type="HAMAP-Rule" id="MF_00003"/>
    </source>
</evidence>
<dbReference type="EMBL" id="BA000017">
    <property type="protein sequence ID" value="BAB57432.1"/>
    <property type="molecule type" value="Genomic_DNA"/>
</dbReference>
<dbReference type="RefSeq" id="WP_000097322.1">
    <property type="nucleotide sequence ID" value="NC_002758.2"/>
</dbReference>
<dbReference type="SMR" id="P65966"/>
<dbReference type="KEGG" id="sav:SAV1270"/>
<dbReference type="HOGENOM" id="CLU_089475_6_3_9"/>
<dbReference type="PhylomeDB" id="P65966"/>
<dbReference type="Proteomes" id="UP000002481">
    <property type="component" value="Chromosome"/>
</dbReference>
<dbReference type="GO" id="GO:0005829">
    <property type="term" value="C:cytosol"/>
    <property type="evidence" value="ECO:0007669"/>
    <property type="project" value="TreeGrafter"/>
</dbReference>
<dbReference type="GO" id="GO:0043024">
    <property type="term" value="F:ribosomal small subunit binding"/>
    <property type="evidence" value="ECO:0007669"/>
    <property type="project" value="TreeGrafter"/>
</dbReference>
<dbReference type="GO" id="GO:0030490">
    <property type="term" value="P:maturation of SSU-rRNA"/>
    <property type="evidence" value="ECO:0007669"/>
    <property type="project" value="UniProtKB-UniRule"/>
</dbReference>
<dbReference type="FunFam" id="3.30.300.20:FF:000009">
    <property type="entry name" value="Ribosome-binding factor A"/>
    <property type="match status" value="1"/>
</dbReference>
<dbReference type="Gene3D" id="3.30.300.20">
    <property type="match status" value="1"/>
</dbReference>
<dbReference type="HAMAP" id="MF_00003">
    <property type="entry name" value="RbfA"/>
    <property type="match status" value="1"/>
</dbReference>
<dbReference type="InterPro" id="IPR015946">
    <property type="entry name" value="KH_dom-like_a/b"/>
</dbReference>
<dbReference type="InterPro" id="IPR000238">
    <property type="entry name" value="RbfA"/>
</dbReference>
<dbReference type="InterPro" id="IPR023799">
    <property type="entry name" value="RbfA_dom_sf"/>
</dbReference>
<dbReference type="InterPro" id="IPR020053">
    <property type="entry name" value="Ribosome-bd_factorA_CS"/>
</dbReference>
<dbReference type="NCBIfam" id="TIGR00082">
    <property type="entry name" value="rbfA"/>
    <property type="match status" value="1"/>
</dbReference>
<dbReference type="PANTHER" id="PTHR33515">
    <property type="entry name" value="RIBOSOME-BINDING FACTOR A, CHLOROPLASTIC-RELATED"/>
    <property type="match status" value="1"/>
</dbReference>
<dbReference type="PANTHER" id="PTHR33515:SF1">
    <property type="entry name" value="RIBOSOME-BINDING FACTOR A, CHLOROPLASTIC-RELATED"/>
    <property type="match status" value="1"/>
</dbReference>
<dbReference type="Pfam" id="PF02033">
    <property type="entry name" value="RBFA"/>
    <property type="match status" value="1"/>
</dbReference>
<dbReference type="SUPFAM" id="SSF89919">
    <property type="entry name" value="Ribosome-binding factor A, RbfA"/>
    <property type="match status" value="1"/>
</dbReference>
<dbReference type="PROSITE" id="PS01319">
    <property type="entry name" value="RBFA"/>
    <property type="match status" value="1"/>
</dbReference>
<protein>
    <recommendedName>
        <fullName evidence="1">Ribosome-binding factor A</fullName>
    </recommendedName>
</protein>
<keyword id="KW-0963">Cytoplasm</keyword>
<keyword id="KW-0690">Ribosome biogenesis</keyword>